<evidence type="ECO:0000305" key="1"/>
<dbReference type="EMBL" id="AE000516">
    <property type="protein sequence ID" value="AAK44266.1"/>
    <property type="molecule type" value="Genomic_DNA"/>
</dbReference>
<dbReference type="PIR" id="D70702">
    <property type="entry name" value="D70702"/>
</dbReference>
<dbReference type="RefSeq" id="WP_003400460.1">
    <property type="nucleotide sequence ID" value="NZ_KK341227.1"/>
</dbReference>
<dbReference type="SMR" id="P9WFK4"/>
<dbReference type="KEGG" id="mtc:MT0043"/>
<dbReference type="PATRIC" id="fig|83331.31.peg.43"/>
<dbReference type="HOGENOM" id="CLU_057596_2_0_11"/>
<dbReference type="Proteomes" id="UP000001020">
    <property type="component" value="Chromosome"/>
</dbReference>
<dbReference type="GO" id="GO:0005829">
    <property type="term" value="C:cytosol"/>
    <property type="evidence" value="ECO:0007669"/>
    <property type="project" value="TreeGrafter"/>
</dbReference>
<dbReference type="FunFam" id="3.40.1740.10:FF:000002">
    <property type="entry name" value="UPF0301 protein A5636_14805"/>
    <property type="match status" value="1"/>
</dbReference>
<dbReference type="Gene3D" id="3.40.1740.10">
    <property type="entry name" value="VC0467-like"/>
    <property type="match status" value="1"/>
</dbReference>
<dbReference type="HAMAP" id="MF_00758">
    <property type="entry name" value="UPF0301"/>
    <property type="match status" value="1"/>
</dbReference>
<dbReference type="InterPro" id="IPR003774">
    <property type="entry name" value="AlgH-like"/>
</dbReference>
<dbReference type="NCBIfam" id="NF001269">
    <property type="entry name" value="PRK00228.2-1"/>
    <property type="match status" value="1"/>
</dbReference>
<dbReference type="NCBIfam" id="NF001272">
    <property type="entry name" value="PRK00228.2-4"/>
    <property type="match status" value="1"/>
</dbReference>
<dbReference type="PANTHER" id="PTHR30327">
    <property type="entry name" value="UNCHARACTERIZED PROTEIN YQGE"/>
    <property type="match status" value="1"/>
</dbReference>
<dbReference type="PANTHER" id="PTHR30327:SF1">
    <property type="entry name" value="UPF0301 PROTEIN YQGE"/>
    <property type="match status" value="1"/>
</dbReference>
<dbReference type="Pfam" id="PF02622">
    <property type="entry name" value="DUF179"/>
    <property type="match status" value="1"/>
</dbReference>
<dbReference type="SUPFAM" id="SSF143456">
    <property type="entry name" value="VC0467-like"/>
    <property type="match status" value="1"/>
</dbReference>
<feature type="chain" id="PRO_0000428523" description="UPF0301 protein MT0043">
    <location>
        <begin position="1"/>
        <end position="202"/>
    </location>
</feature>
<organism>
    <name type="scientific">Mycobacterium tuberculosis (strain CDC 1551 / Oshkosh)</name>
    <dbReference type="NCBI Taxonomy" id="83331"/>
    <lineage>
        <taxon>Bacteria</taxon>
        <taxon>Bacillati</taxon>
        <taxon>Actinomycetota</taxon>
        <taxon>Actinomycetes</taxon>
        <taxon>Mycobacteriales</taxon>
        <taxon>Mycobacteriaceae</taxon>
        <taxon>Mycobacterium</taxon>
        <taxon>Mycobacterium tuberculosis complex</taxon>
    </lineage>
</organism>
<reference key="1">
    <citation type="journal article" date="2002" name="J. Bacteriol.">
        <title>Whole-genome comparison of Mycobacterium tuberculosis clinical and laboratory strains.</title>
        <authorList>
            <person name="Fleischmann R.D."/>
            <person name="Alland D."/>
            <person name="Eisen J.A."/>
            <person name="Carpenter L."/>
            <person name="White O."/>
            <person name="Peterson J.D."/>
            <person name="DeBoy R.T."/>
            <person name="Dodson R.J."/>
            <person name="Gwinn M.L."/>
            <person name="Haft D.H."/>
            <person name="Hickey E.K."/>
            <person name="Kolonay J.F."/>
            <person name="Nelson W.C."/>
            <person name="Umayam L.A."/>
            <person name="Ermolaeva M.D."/>
            <person name="Salzberg S.L."/>
            <person name="Delcher A."/>
            <person name="Utterback T.R."/>
            <person name="Weidman J.F."/>
            <person name="Khouri H.M."/>
            <person name="Gill J."/>
            <person name="Mikula A."/>
            <person name="Bishai W."/>
            <person name="Jacobs W.R. Jr."/>
            <person name="Venter J.C."/>
            <person name="Fraser C.M."/>
        </authorList>
    </citation>
    <scope>NUCLEOTIDE SEQUENCE [LARGE SCALE GENOMIC DNA]</scope>
    <source>
        <strain>CDC 1551 / Oshkosh</strain>
    </source>
</reference>
<keyword id="KW-1185">Reference proteome</keyword>
<gene>
    <name type="ordered locus">MT0043</name>
</gene>
<protein>
    <recommendedName>
        <fullName>UPF0301 protein MT0043</fullName>
    </recommendedName>
</protein>
<proteinExistence type="inferred from homology"/>
<name>Y038_MYCTO</name>
<sequence length="202" mass="21808">MVAPHEDPEDHVAPAAQRVRAGTLLLANTDLLEPTFRRSVIYIVEHNDGGTLGVVLNRPSETAVYNVLPQWAKLAAKPKTMFIGGPVKRDAALCLAVLRVGADPEGVPGLRHVAGRLVMVDLDADPEVLAAAVEGVRIYAGYSGWTIGQLEGEIERDDWIVLSALPSDVLVGPRADLWGQVLRRQPLPLSLLATHPIDLSRN</sequence>
<accession>P9WFK4</accession>
<accession>L0T2D6</accession>
<accession>P67757</accession>
<accession>P71608</accession>
<comment type="similarity">
    <text evidence="1">Belongs to the UPF0301 (AlgH) family.</text>
</comment>